<name>FABA_SHEB8</name>
<protein>
    <recommendedName>
        <fullName evidence="1">3-hydroxydecanoyl-[acyl-carrier-protein] dehydratase</fullName>
        <ecNumber evidence="1">4.2.1.59</ecNumber>
    </recommendedName>
    <alternativeName>
        <fullName evidence="1">3-hydroxyacyl-[acyl-carrier-protein] dehydratase FabA</fullName>
    </alternativeName>
    <alternativeName>
        <fullName evidence="1">Beta-hydroxydecanoyl thioester dehydrase</fullName>
    </alternativeName>
    <alternativeName>
        <fullName evidence="1">Trans-2-decenoyl-[acyl-carrier-protein] isomerase</fullName>
        <ecNumber evidence="1">5.3.3.14</ecNumber>
    </alternativeName>
</protein>
<sequence>MNKANSFNKEELIACGHGKLFGPNSPRLPVDNMLMMDRIVTINDNGGEFGKGEIVAELDINPDLWFFDCHFITDPVMPGCLGLDAMWQLVGFYLGWEGAEGKGRALGVGEVKFTGQVLPGAKKVTYKLNIKRTIHRKLVMGIADAILEVDGRQIYSATDLKVGVFSDTSTF</sequence>
<accession>A6WPK1</accession>
<gene>
    <name evidence="1" type="primary">fabA</name>
    <name type="ordered locus">Shew185_2605</name>
</gene>
<evidence type="ECO:0000255" key="1">
    <source>
        <dbReference type="HAMAP-Rule" id="MF_00405"/>
    </source>
</evidence>
<proteinExistence type="inferred from homology"/>
<comment type="function">
    <text evidence="1">Necessary for the introduction of cis unsaturation into fatty acids. Catalyzes the dehydration of (3R)-3-hydroxydecanoyl-ACP to E-(2)-decenoyl-ACP and then its isomerization to Z-(3)-decenoyl-ACP. Can catalyze the dehydratase reaction for beta-hydroxyacyl-ACPs with saturated chain lengths up to 16:0, being most active on intermediate chain length.</text>
</comment>
<comment type="catalytic activity">
    <reaction evidence="1">
        <text>a (3R)-hydroxyacyl-[ACP] = a (2E)-enoyl-[ACP] + H2O</text>
        <dbReference type="Rhea" id="RHEA:13097"/>
        <dbReference type="Rhea" id="RHEA-COMP:9925"/>
        <dbReference type="Rhea" id="RHEA-COMP:9945"/>
        <dbReference type="ChEBI" id="CHEBI:15377"/>
        <dbReference type="ChEBI" id="CHEBI:78784"/>
        <dbReference type="ChEBI" id="CHEBI:78827"/>
        <dbReference type="EC" id="4.2.1.59"/>
    </reaction>
</comment>
<comment type="catalytic activity">
    <reaction evidence="1">
        <text>(3R)-hydroxydecanoyl-[ACP] = (2E)-decenoyl-[ACP] + H2O</text>
        <dbReference type="Rhea" id="RHEA:41860"/>
        <dbReference type="Rhea" id="RHEA-COMP:9638"/>
        <dbReference type="Rhea" id="RHEA-COMP:9639"/>
        <dbReference type="ChEBI" id="CHEBI:15377"/>
        <dbReference type="ChEBI" id="CHEBI:78466"/>
        <dbReference type="ChEBI" id="CHEBI:78467"/>
    </reaction>
</comment>
<comment type="catalytic activity">
    <reaction evidence="1">
        <text>(2E)-decenoyl-[ACP] = (3Z)-decenoyl-[ACP]</text>
        <dbReference type="Rhea" id="RHEA:23568"/>
        <dbReference type="Rhea" id="RHEA-COMP:9639"/>
        <dbReference type="Rhea" id="RHEA-COMP:9927"/>
        <dbReference type="ChEBI" id="CHEBI:78467"/>
        <dbReference type="ChEBI" id="CHEBI:78798"/>
        <dbReference type="EC" id="5.3.3.14"/>
    </reaction>
</comment>
<comment type="pathway">
    <text evidence="1">Lipid metabolism; fatty acid biosynthesis.</text>
</comment>
<comment type="subunit">
    <text evidence="1">Homodimer.</text>
</comment>
<comment type="subcellular location">
    <subcellularLocation>
        <location evidence="1">Cytoplasm</location>
    </subcellularLocation>
</comment>
<comment type="similarity">
    <text evidence="1">Belongs to the thioester dehydratase family. FabA subfamily.</text>
</comment>
<feature type="chain" id="PRO_1000201209" description="3-hydroxydecanoyl-[acyl-carrier-protein] dehydratase">
    <location>
        <begin position="1"/>
        <end position="171"/>
    </location>
</feature>
<feature type="active site" evidence="1">
    <location>
        <position position="70"/>
    </location>
</feature>
<keyword id="KW-0963">Cytoplasm</keyword>
<keyword id="KW-0275">Fatty acid biosynthesis</keyword>
<keyword id="KW-0276">Fatty acid metabolism</keyword>
<keyword id="KW-0413">Isomerase</keyword>
<keyword id="KW-0444">Lipid biosynthesis</keyword>
<keyword id="KW-0443">Lipid metabolism</keyword>
<keyword id="KW-0456">Lyase</keyword>
<dbReference type="EC" id="4.2.1.59" evidence="1"/>
<dbReference type="EC" id="5.3.3.14" evidence="1"/>
<dbReference type="EMBL" id="CP000753">
    <property type="protein sequence ID" value="ABS08740.1"/>
    <property type="molecule type" value="Genomic_DNA"/>
</dbReference>
<dbReference type="RefSeq" id="WP_006082073.1">
    <property type="nucleotide sequence ID" value="NC_009665.1"/>
</dbReference>
<dbReference type="SMR" id="A6WPK1"/>
<dbReference type="GeneID" id="11772774"/>
<dbReference type="KEGG" id="sbm:Shew185_2605"/>
<dbReference type="HOGENOM" id="CLU_097925_0_0_6"/>
<dbReference type="UniPathway" id="UPA00094"/>
<dbReference type="GO" id="GO:0005737">
    <property type="term" value="C:cytoplasm"/>
    <property type="evidence" value="ECO:0007669"/>
    <property type="project" value="UniProtKB-SubCell"/>
</dbReference>
<dbReference type="GO" id="GO:0019171">
    <property type="term" value="F:(3R)-hydroxyacyl-[acyl-carrier-protein] dehydratase activity"/>
    <property type="evidence" value="ECO:0007669"/>
    <property type="project" value="UniProtKB-UniRule"/>
</dbReference>
<dbReference type="GO" id="GO:0034017">
    <property type="term" value="F:trans-2-decenoyl-acyl-carrier-protein isomerase activity"/>
    <property type="evidence" value="ECO:0007669"/>
    <property type="project" value="UniProtKB-UniRule"/>
</dbReference>
<dbReference type="GO" id="GO:0006636">
    <property type="term" value="P:unsaturated fatty acid biosynthetic process"/>
    <property type="evidence" value="ECO:0007669"/>
    <property type="project" value="UniProtKB-UniRule"/>
</dbReference>
<dbReference type="CDD" id="cd01287">
    <property type="entry name" value="FabA"/>
    <property type="match status" value="1"/>
</dbReference>
<dbReference type="Gene3D" id="3.10.129.10">
    <property type="entry name" value="Hotdog Thioesterase"/>
    <property type="match status" value="1"/>
</dbReference>
<dbReference type="HAMAP" id="MF_00405">
    <property type="entry name" value="FabA"/>
    <property type="match status" value="1"/>
</dbReference>
<dbReference type="InterPro" id="IPR010083">
    <property type="entry name" value="FabA"/>
</dbReference>
<dbReference type="InterPro" id="IPR013114">
    <property type="entry name" value="FabA_FabZ"/>
</dbReference>
<dbReference type="InterPro" id="IPR029069">
    <property type="entry name" value="HotDog_dom_sf"/>
</dbReference>
<dbReference type="NCBIfam" id="TIGR01749">
    <property type="entry name" value="fabA"/>
    <property type="match status" value="1"/>
</dbReference>
<dbReference type="NCBIfam" id="NF003509">
    <property type="entry name" value="PRK05174.1"/>
    <property type="match status" value="1"/>
</dbReference>
<dbReference type="PANTHER" id="PTHR30272">
    <property type="entry name" value="3-HYDROXYACYL-[ACYL-CARRIER-PROTEIN] DEHYDRATASE"/>
    <property type="match status" value="1"/>
</dbReference>
<dbReference type="PANTHER" id="PTHR30272:SF8">
    <property type="entry name" value="3-HYDROXYDECANOYL-[ACYL-CARRIER-PROTEIN] DEHYDRATASE"/>
    <property type="match status" value="1"/>
</dbReference>
<dbReference type="Pfam" id="PF07977">
    <property type="entry name" value="FabA"/>
    <property type="match status" value="1"/>
</dbReference>
<dbReference type="SUPFAM" id="SSF54637">
    <property type="entry name" value="Thioesterase/thiol ester dehydrase-isomerase"/>
    <property type="match status" value="1"/>
</dbReference>
<organism>
    <name type="scientific">Shewanella baltica (strain OS185)</name>
    <dbReference type="NCBI Taxonomy" id="402882"/>
    <lineage>
        <taxon>Bacteria</taxon>
        <taxon>Pseudomonadati</taxon>
        <taxon>Pseudomonadota</taxon>
        <taxon>Gammaproteobacteria</taxon>
        <taxon>Alteromonadales</taxon>
        <taxon>Shewanellaceae</taxon>
        <taxon>Shewanella</taxon>
    </lineage>
</organism>
<reference key="1">
    <citation type="submission" date="2007-07" db="EMBL/GenBank/DDBJ databases">
        <title>Complete sequence of chromosome of Shewanella baltica OS185.</title>
        <authorList>
            <consortium name="US DOE Joint Genome Institute"/>
            <person name="Copeland A."/>
            <person name="Lucas S."/>
            <person name="Lapidus A."/>
            <person name="Barry K."/>
            <person name="Glavina del Rio T."/>
            <person name="Dalin E."/>
            <person name="Tice H."/>
            <person name="Pitluck S."/>
            <person name="Sims D."/>
            <person name="Brettin T."/>
            <person name="Bruce D."/>
            <person name="Detter J.C."/>
            <person name="Han C."/>
            <person name="Schmutz J."/>
            <person name="Larimer F."/>
            <person name="Land M."/>
            <person name="Hauser L."/>
            <person name="Kyrpides N."/>
            <person name="Mikhailova N."/>
            <person name="Brettar I."/>
            <person name="Rodrigues J."/>
            <person name="Konstantinidis K."/>
            <person name="Tiedje J."/>
            <person name="Richardson P."/>
        </authorList>
    </citation>
    <scope>NUCLEOTIDE SEQUENCE [LARGE SCALE GENOMIC DNA]</scope>
    <source>
        <strain>OS185</strain>
    </source>
</reference>